<comment type="cofactor">
    <cofactor evidence="1">
        <name>[4Fe-4S] cluster</name>
        <dbReference type="ChEBI" id="CHEBI:49883"/>
    </cofactor>
    <text evidence="1">Binds 2 [4Fe-4S] clusters.</text>
</comment>
<protein>
    <recommendedName>
        <fullName>Uncharacterized ferredoxin MJ0146</fullName>
    </recommendedName>
</protein>
<feature type="chain" id="PRO_0000159131" description="Uncharacterized ferredoxin MJ0146">
    <location>
        <begin position="1"/>
        <end position="69"/>
    </location>
</feature>
<feature type="domain" description="4Fe-4S ferredoxin-type 1" evidence="2">
    <location>
        <begin position="2"/>
        <end position="30"/>
    </location>
</feature>
<feature type="domain" description="4Fe-4S ferredoxin-type 2" evidence="2">
    <location>
        <begin position="38"/>
        <end position="67"/>
    </location>
</feature>
<feature type="binding site" evidence="1">
    <location>
        <position position="10"/>
    </location>
    <ligand>
        <name>[4Fe-4S] cluster</name>
        <dbReference type="ChEBI" id="CHEBI:49883"/>
        <label>1</label>
    </ligand>
</feature>
<feature type="binding site" evidence="1">
    <location>
        <position position="13"/>
    </location>
    <ligand>
        <name>[4Fe-4S] cluster</name>
        <dbReference type="ChEBI" id="CHEBI:49883"/>
        <label>1</label>
    </ligand>
</feature>
<feature type="binding site" evidence="1">
    <location>
        <position position="16"/>
    </location>
    <ligand>
        <name>[4Fe-4S] cluster</name>
        <dbReference type="ChEBI" id="CHEBI:49883"/>
        <label>1</label>
    </ligand>
</feature>
<feature type="binding site" evidence="1">
    <location>
        <position position="20"/>
    </location>
    <ligand>
        <name>[4Fe-4S] cluster</name>
        <dbReference type="ChEBI" id="CHEBI:49883"/>
        <label>1</label>
    </ligand>
</feature>
<feature type="binding site" evidence="1">
    <location>
        <position position="47"/>
    </location>
    <ligand>
        <name>[4Fe-4S] cluster</name>
        <dbReference type="ChEBI" id="CHEBI:49883"/>
        <label>2</label>
    </ligand>
</feature>
<feature type="binding site" evidence="1">
    <location>
        <position position="50"/>
    </location>
    <ligand>
        <name>[4Fe-4S] cluster</name>
        <dbReference type="ChEBI" id="CHEBI:49883"/>
        <label>2</label>
    </ligand>
</feature>
<feature type="binding site" evidence="1">
    <location>
        <position position="53"/>
    </location>
    <ligand>
        <name>[4Fe-4S] cluster</name>
        <dbReference type="ChEBI" id="CHEBI:49883"/>
        <label>2</label>
    </ligand>
</feature>
<feature type="binding site" evidence="1">
    <location>
        <position position="57"/>
    </location>
    <ligand>
        <name>[4Fe-4S] cluster</name>
        <dbReference type="ChEBI" id="CHEBI:49883"/>
        <label>2</label>
    </ligand>
</feature>
<organism>
    <name type="scientific">Methanocaldococcus jannaschii (strain ATCC 43067 / DSM 2661 / JAL-1 / JCM 10045 / NBRC 100440)</name>
    <name type="common">Methanococcus jannaschii</name>
    <dbReference type="NCBI Taxonomy" id="243232"/>
    <lineage>
        <taxon>Archaea</taxon>
        <taxon>Methanobacteriati</taxon>
        <taxon>Methanobacteriota</taxon>
        <taxon>Methanomada group</taxon>
        <taxon>Methanococci</taxon>
        <taxon>Methanococcales</taxon>
        <taxon>Methanocaldococcaceae</taxon>
        <taxon>Methanocaldococcus</taxon>
    </lineage>
</organism>
<proteinExistence type="inferred from homology"/>
<accession>Q57610</accession>
<gene>
    <name type="ordered locus">MJ0146</name>
</gene>
<name>FER3_METJA</name>
<dbReference type="EMBL" id="L77117">
    <property type="protein sequence ID" value="AAB98129.1"/>
    <property type="molecule type" value="Genomic_DNA"/>
</dbReference>
<dbReference type="PIR" id="C64318">
    <property type="entry name" value="C64318"/>
</dbReference>
<dbReference type="RefSeq" id="WP_010869641.1">
    <property type="nucleotide sequence ID" value="NC_000909.1"/>
</dbReference>
<dbReference type="SMR" id="Q57610"/>
<dbReference type="FunCoup" id="Q57610">
    <property type="interactions" value="90"/>
</dbReference>
<dbReference type="STRING" id="243232.MJ_0146"/>
<dbReference type="PaxDb" id="243232-MJ_0146"/>
<dbReference type="EnsemblBacteria" id="AAB98129">
    <property type="protein sequence ID" value="AAB98129"/>
    <property type="gene ID" value="MJ_0146"/>
</dbReference>
<dbReference type="GeneID" id="1450990"/>
<dbReference type="KEGG" id="mja:MJ_0146"/>
<dbReference type="eggNOG" id="arCOG00959">
    <property type="taxonomic scope" value="Archaea"/>
</dbReference>
<dbReference type="HOGENOM" id="CLU_139698_5_3_2"/>
<dbReference type="InParanoid" id="Q57610"/>
<dbReference type="OrthoDB" id="51316at2157"/>
<dbReference type="PhylomeDB" id="Q57610"/>
<dbReference type="Proteomes" id="UP000000805">
    <property type="component" value="Chromosome"/>
</dbReference>
<dbReference type="GO" id="GO:0051539">
    <property type="term" value="F:4 iron, 4 sulfur cluster binding"/>
    <property type="evidence" value="ECO:0007669"/>
    <property type="project" value="UniProtKB-KW"/>
</dbReference>
<dbReference type="GO" id="GO:0046872">
    <property type="term" value="F:metal ion binding"/>
    <property type="evidence" value="ECO:0007669"/>
    <property type="project" value="UniProtKB-KW"/>
</dbReference>
<dbReference type="GO" id="GO:0016491">
    <property type="term" value="F:oxidoreductase activity"/>
    <property type="evidence" value="ECO:0007669"/>
    <property type="project" value="UniProtKB-ARBA"/>
</dbReference>
<dbReference type="Gene3D" id="3.30.70.20">
    <property type="match status" value="1"/>
</dbReference>
<dbReference type="InterPro" id="IPR017896">
    <property type="entry name" value="4Fe4S_Fe-S-bd"/>
</dbReference>
<dbReference type="InterPro" id="IPR017900">
    <property type="entry name" value="4Fe4S_Fe_S_CS"/>
</dbReference>
<dbReference type="PANTHER" id="PTHR43122">
    <property type="entry name" value="FERREDOXIN SUBUNIT OF PYRUVATE:FLAVODOXIN OXIDOREDUCTASE-RELATED"/>
    <property type="match status" value="1"/>
</dbReference>
<dbReference type="PANTHER" id="PTHR43122:SF1">
    <property type="entry name" value="IRON-SULFUR-BINDING PROTEIN"/>
    <property type="match status" value="1"/>
</dbReference>
<dbReference type="Pfam" id="PF12838">
    <property type="entry name" value="Fer4_7"/>
    <property type="match status" value="1"/>
</dbReference>
<dbReference type="SUPFAM" id="SSF54862">
    <property type="entry name" value="4Fe-4S ferredoxins"/>
    <property type="match status" value="1"/>
</dbReference>
<dbReference type="PROSITE" id="PS00198">
    <property type="entry name" value="4FE4S_FER_1"/>
    <property type="match status" value="2"/>
</dbReference>
<dbReference type="PROSITE" id="PS51379">
    <property type="entry name" value="4FE4S_FER_2"/>
    <property type="match status" value="2"/>
</dbReference>
<reference key="1">
    <citation type="journal article" date="1996" name="Science">
        <title>Complete genome sequence of the methanogenic archaeon, Methanococcus jannaschii.</title>
        <authorList>
            <person name="Bult C.J."/>
            <person name="White O."/>
            <person name="Olsen G.J."/>
            <person name="Zhou L."/>
            <person name="Fleischmann R.D."/>
            <person name="Sutton G.G."/>
            <person name="Blake J.A."/>
            <person name="FitzGerald L.M."/>
            <person name="Clayton R.A."/>
            <person name="Gocayne J.D."/>
            <person name="Kerlavage A.R."/>
            <person name="Dougherty B.A."/>
            <person name="Tomb J.-F."/>
            <person name="Adams M.D."/>
            <person name="Reich C.I."/>
            <person name="Overbeek R."/>
            <person name="Kirkness E.F."/>
            <person name="Weinstock K.G."/>
            <person name="Merrick J.M."/>
            <person name="Glodek A."/>
            <person name="Scott J.L."/>
            <person name="Geoghagen N.S.M."/>
            <person name="Weidman J.F."/>
            <person name="Fuhrmann J.L."/>
            <person name="Nguyen D."/>
            <person name="Utterback T.R."/>
            <person name="Kelley J.M."/>
            <person name="Peterson J.D."/>
            <person name="Sadow P.W."/>
            <person name="Hanna M.C."/>
            <person name="Cotton M.D."/>
            <person name="Roberts K.M."/>
            <person name="Hurst M.A."/>
            <person name="Kaine B.P."/>
            <person name="Borodovsky M."/>
            <person name="Klenk H.-P."/>
            <person name="Fraser C.M."/>
            <person name="Smith H.O."/>
            <person name="Woese C.R."/>
            <person name="Venter J.C."/>
        </authorList>
    </citation>
    <scope>NUCLEOTIDE SEQUENCE [LARGE SCALE GENOMIC DNA]</scope>
    <source>
        <strain>ATCC 43067 / DSM 2661 / JAL-1 / JCM 10045 / NBRC 100440</strain>
    </source>
</reference>
<keyword id="KW-0004">4Fe-4S</keyword>
<keyword id="KW-0249">Electron transport</keyword>
<keyword id="KW-0408">Iron</keyword>
<keyword id="KW-0411">Iron-sulfur</keyword>
<keyword id="KW-0479">Metal-binding</keyword>
<keyword id="KW-1185">Reference proteome</keyword>
<keyword id="KW-0677">Repeat</keyword>
<keyword id="KW-0813">Transport</keyword>
<sequence length="69" mass="7756">MKIEINENFCKGCDICIVVCPRGVFEKSKKLNKKGIYPPIPVNPEKCTKCNLCILQCPDQAISIELSQE</sequence>
<evidence type="ECO:0000250" key="1"/>
<evidence type="ECO:0000255" key="2">
    <source>
        <dbReference type="PROSITE-ProRule" id="PRU00711"/>
    </source>
</evidence>